<evidence type="ECO:0000255" key="1"/>
<evidence type="ECO:0000305" key="2"/>
<sequence>MNFTIPAPFTAIHTIFDLAFTTSLDTMLGTIQEAVSAPLVACVTLWIIVQGILVMRGEIDTRGGITRVITVTVVVALVVGQANYHDYVVSVFEETIPNFIQQFSGSGLPLQTIPAQLDTMFALTQAAFQRIASEIGPMNDQDILAFQGAQWVFYGTLWSAFGIYDAVGILTKVLLAIGPLILTGYIFDRTRDIAAKWIGQLITYGLLLLLLNLVATIVILTEATALTLMLGVITLAGTTAAKIIGLYELDMFFLTGDALIVALPAIAGNIGGSYWSGATQSANSLYRRFAQVDRR</sequence>
<feature type="chain" id="PRO_0000065840" description="Protein VirB6">
    <location>
        <begin position="1"/>
        <end position="295"/>
    </location>
</feature>
<feature type="transmembrane region" description="Helical" evidence="1">
    <location>
        <begin position="35"/>
        <end position="55"/>
    </location>
</feature>
<feature type="transmembrane region" description="Helical" evidence="1">
    <location>
        <begin position="68"/>
        <end position="88"/>
    </location>
</feature>
<feature type="transmembrane region" description="Helical" evidence="1">
    <location>
        <begin position="167"/>
        <end position="187"/>
    </location>
</feature>
<feature type="transmembrane region" description="Helical" evidence="1">
    <location>
        <begin position="201"/>
        <end position="221"/>
    </location>
</feature>
<feature type="transmembrane region" description="Helical" evidence="1">
    <location>
        <begin position="226"/>
        <end position="246"/>
    </location>
</feature>
<feature type="transmembrane region" description="Helical" evidence="1">
    <location>
        <begin position="251"/>
        <end position="271"/>
    </location>
</feature>
<feature type="sequence conflict" description="In Ref. 2 and 3." evidence="2" ref="2 3">
    <location>
        <position position="268"/>
    </location>
</feature>
<comment type="function">
    <text>VirB proteins are suggested to act at the bacterial surface and there play an important role in directing T-DNA transfer to plant cells.</text>
</comment>
<comment type="subcellular location">
    <subcellularLocation>
        <location evidence="2">Membrane</location>
        <topology evidence="2">Multi-pass membrane protein</topology>
    </subcellularLocation>
</comment>
<comment type="similarity">
    <text evidence="2">Belongs to the TrbL/VirB6 family.</text>
</comment>
<name>VIRB6_AGRFC</name>
<keyword id="KW-0192">Crown gall tumor</keyword>
<keyword id="KW-0472">Membrane</keyword>
<keyword id="KW-0614">Plasmid</keyword>
<keyword id="KW-1185">Reference proteome</keyword>
<keyword id="KW-0812">Transmembrane</keyword>
<keyword id="KW-1133">Transmembrane helix</keyword>
<protein>
    <recommendedName>
        <fullName>Protein VirB6</fullName>
    </recommendedName>
</protein>
<proteinExistence type="inferred from homology"/>
<geneLocation type="plasmid">
    <name>pTiC58</name>
</geneLocation>
<organism>
    <name type="scientific">Agrobacterium fabrum (strain C58 / ATCC 33970)</name>
    <name type="common">Agrobacterium tumefaciens (strain C58)</name>
    <dbReference type="NCBI Taxonomy" id="176299"/>
    <lineage>
        <taxon>Bacteria</taxon>
        <taxon>Pseudomonadati</taxon>
        <taxon>Pseudomonadota</taxon>
        <taxon>Alphaproteobacteria</taxon>
        <taxon>Hyphomicrobiales</taxon>
        <taxon>Rhizobiaceae</taxon>
        <taxon>Rhizobium/Agrobacterium group</taxon>
        <taxon>Agrobacterium</taxon>
        <taxon>Agrobacterium tumefaciens complex</taxon>
    </lineage>
</organism>
<gene>
    <name type="primary">virB6</name>
    <name type="ordered locus">Atu6172</name>
    <name type="ORF">AGR_pTi_10</name>
</gene>
<reference key="1">
    <citation type="journal article" date="1990" name="Mol. Gen. Genet.">
        <title>The virB operon of Agrobacterium tumefaciens pTiC58 encodes 11 open reading frames.</title>
        <authorList>
            <person name="Kuldau G.A."/>
            <person name="de Vos G."/>
            <person name="Owen J."/>
            <person name="McCaffrey G."/>
            <person name="Zambryski P."/>
        </authorList>
    </citation>
    <scope>NUCLEOTIDE SEQUENCE [GENOMIC DNA]</scope>
</reference>
<reference key="2">
    <citation type="journal article" date="1990" name="Plasmid">
        <title>Molecular characterization of the vir regulon of Agrobacterium tumefaciens: complete nucleotide sequence and gene organization of the 28.63-kbp regulon cloned as a single unit.</title>
        <authorList>
            <person name="Rogowsky P.M."/>
            <person name="Powell B.S."/>
            <person name="Shirasu K."/>
            <person name="Lin T.-S."/>
            <person name="Morel P."/>
            <person name="Zyprian E.M."/>
            <person name="Steck T.R."/>
            <person name="Kado C.I."/>
        </authorList>
    </citation>
    <scope>NUCLEOTIDE SEQUENCE [GENOMIC DNA]</scope>
</reference>
<reference key="3">
    <citation type="journal article" date="1990" name="Mol. Microbiol.">
        <title>Characterization of the virB operon of an Agrobacterium tumefaciens Ti plasmid: nucleotide sequence and protein analysis.</title>
        <authorList>
            <person name="Shirasu K."/>
            <person name="Morel P."/>
            <person name="Kado C.I."/>
        </authorList>
    </citation>
    <scope>NUCLEOTIDE SEQUENCE [GENOMIC DNA]</scope>
</reference>
<reference key="4">
    <citation type="journal article" date="2001" name="Science">
        <title>The genome of the natural genetic engineer Agrobacterium tumefaciens C58.</title>
        <authorList>
            <person name="Wood D.W."/>
            <person name="Setubal J.C."/>
            <person name="Kaul R."/>
            <person name="Monks D.E."/>
            <person name="Kitajima J.P."/>
            <person name="Okura V.K."/>
            <person name="Zhou Y."/>
            <person name="Chen L."/>
            <person name="Wood G.E."/>
            <person name="Almeida N.F. Jr."/>
            <person name="Woo L."/>
            <person name="Chen Y."/>
            <person name="Paulsen I.T."/>
            <person name="Eisen J.A."/>
            <person name="Karp P.D."/>
            <person name="Bovee D. Sr."/>
            <person name="Chapman P."/>
            <person name="Clendenning J."/>
            <person name="Deatherage G."/>
            <person name="Gillet W."/>
            <person name="Grant C."/>
            <person name="Kutyavin T."/>
            <person name="Levy R."/>
            <person name="Li M.-J."/>
            <person name="McClelland E."/>
            <person name="Palmieri A."/>
            <person name="Raymond C."/>
            <person name="Rouse G."/>
            <person name="Saenphimmachak C."/>
            <person name="Wu Z."/>
            <person name="Romero P."/>
            <person name="Gordon D."/>
            <person name="Zhang S."/>
            <person name="Yoo H."/>
            <person name="Tao Y."/>
            <person name="Biddle P."/>
            <person name="Jung M."/>
            <person name="Krespan W."/>
            <person name="Perry M."/>
            <person name="Gordon-Kamm B."/>
            <person name="Liao L."/>
            <person name="Kim S."/>
            <person name="Hendrick C."/>
            <person name="Zhao Z.-Y."/>
            <person name="Dolan M."/>
            <person name="Chumley F."/>
            <person name="Tingey S.V."/>
            <person name="Tomb J.-F."/>
            <person name="Gordon M.P."/>
            <person name="Olson M.V."/>
            <person name="Nester E.W."/>
        </authorList>
    </citation>
    <scope>NUCLEOTIDE SEQUENCE [LARGE SCALE GENOMIC DNA]</scope>
</reference>
<reference key="5">
    <citation type="journal article" date="2001" name="Science">
        <title>Genome sequence of the plant pathogen and biotechnology agent Agrobacterium tumefaciens C58.</title>
        <authorList>
            <person name="Goodner B."/>
            <person name="Hinkle G."/>
            <person name="Gattung S."/>
            <person name="Miller N."/>
            <person name="Blanchard M."/>
            <person name="Qurollo B."/>
            <person name="Goldman B.S."/>
            <person name="Cao Y."/>
            <person name="Askenazi M."/>
            <person name="Halling C."/>
            <person name="Mullin L."/>
            <person name="Houmiel K."/>
            <person name="Gordon J."/>
            <person name="Vaudin M."/>
            <person name="Iartchouk O."/>
            <person name="Epp A."/>
            <person name="Liu F."/>
            <person name="Wollam C."/>
            <person name="Allinger M."/>
            <person name="Doughty D."/>
            <person name="Scott C."/>
            <person name="Lappas C."/>
            <person name="Markelz B."/>
            <person name="Flanagan C."/>
            <person name="Crowell C."/>
            <person name="Gurson J."/>
            <person name="Lomo C."/>
            <person name="Sear C."/>
            <person name="Strub G."/>
            <person name="Cielo C."/>
            <person name="Slater S."/>
        </authorList>
    </citation>
    <scope>NUCLEOTIDE SEQUENCE [LARGE SCALE GENOMIC DNA]</scope>
    <source>
        <strain>C58 / ATCC 33970</strain>
    </source>
</reference>
<dbReference type="EMBL" id="X53264">
    <property type="protein sequence ID" value="CAA37359.1"/>
    <property type="molecule type" value="Genomic_DNA"/>
</dbReference>
<dbReference type="EMBL" id="J03320">
    <property type="protein sequence ID" value="AAA91596.1"/>
    <property type="molecule type" value="Genomic_DNA"/>
</dbReference>
<dbReference type="EMBL" id="AE007871">
    <property type="protein sequence ID" value="AAK90934.2"/>
    <property type="molecule type" value="Genomic_DNA"/>
</dbReference>
<dbReference type="PIR" id="AB3249">
    <property type="entry name" value="AB3249"/>
</dbReference>
<dbReference type="PIR" id="S12346">
    <property type="entry name" value="B6AG58"/>
</dbReference>
<dbReference type="RefSeq" id="NP_396493.2">
    <property type="nucleotide sequence ID" value="NC_003065.3"/>
</dbReference>
<dbReference type="RefSeq" id="WP_010974917.1">
    <property type="nucleotide sequence ID" value="NC_003065.3"/>
</dbReference>
<dbReference type="SMR" id="P17796"/>
<dbReference type="EnsemblBacteria" id="AAK90934">
    <property type="protein sequence ID" value="AAK90934"/>
    <property type="gene ID" value="Atu6172"/>
</dbReference>
<dbReference type="GeneID" id="86882427"/>
<dbReference type="KEGG" id="atu:Atu6172"/>
<dbReference type="PATRIC" id="fig|176299.10.peg.5368"/>
<dbReference type="HOGENOM" id="CLU_914913_0_0_5"/>
<dbReference type="OrthoDB" id="8058394at2"/>
<dbReference type="PhylomeDB" id="P17796"/>
<dbReference type="BioCyc" id="AGRO:ATU6172-MONOMER"/>
<dbReference type="Proteomes" id="UP000000813">
    <property type="component" value="Plasmid Ti"/>
</dbReference>
<dbReference type="GO" id="GO:0016020">
    <property type="term" value="C:membrane"/>
    <property type="evidence" value="ECO:0007669"/>
    <property type="project" value="UniProtKB-SubCell"/>
</dbReference>
<dbReference type="GO" id="GO:0043684">
    <property type="term" value="C:type IV secretion system complex"/>
    <property type="evidence" value="ECO:0000317"/>
    <property type="project" value="PAMGO_GAT"/>
</dbReference>
<dbReference type="GO" id="GO:0030255">
    <property type="term" value="P:protein secretion by the type IV secretion system"/>
    <property type="evidence" value="ECO:0000317"/>
    <property type="project" value="PAMGO_GAT"/>
</dbReference>
<dbReference type="InterPro" id="IPR007688">
    <property type="entry name" value="Conjugal_tfr_TrbL/VirB6"/>
</dbReference>
<dbReference type="NCBIfam" id="NF010426">
    <property type="entry name" value="PRK13852.1"/>
    <property type="match status" value="1"/>
</dbReference>
<dbReference type="Pfam" id="PF04610">
    <property type="entry name" value="TrbL"/>
    <property type="match status" value="1"/>
</dbReference>
<accession>P17796</accession>